<gene>
    <name evidence="1" type="primary">trhO</name>
    <name type="ordered locus">BTH_I0983</name>
</gene>
<organism>
    <name type="scientific">Burkholderia thailandensis (strain ATCC 700388 / DSM 13276 / CCUG 48851 / CIP 106301 / E264)</name>
    <dbReference type="NCBI Taxonomy" id="271848"/>
    <lineage>
        <taxon>Bacteria</taxon>
        <taxon>Pseudomonadati</taxon>
        <taxon>Pseudomonadota</taxon>
        <taxon>Betaproteobacteria</taxon>
        <taxon>Burkholderiales</taxon>
        <taxon>Burkholderiaceae</taxon>
        <taxon>Burkholderia</taxon>
        <taxon>pseudomallei group</taxon>
    </lineage>
</organism>
<accession>Q2SZW2</accession>
<dbReference type="EC" id="1.14.-.-" evidence="1"/>
<dbReference type="EMBL" id="CP000086">
    <property type="protein sequence ID" value="ABC36761.1"/>
    <property type="status" value="ALT_INIT"/>
    <property type="molecule type" value="Genomic_DNA"/>
</dbReference>
<dbReference type="RefSeq" id="WP_009892331.1">
    <property type="nucleotide sequence ID" value="NZ_CP008785.1"/>
</dbReference>
<dbReference type="SMR" id="Q2SZW2"/>
<dbReference type="GeneID" id="45120737"/>
<dbReference type="KEGG" id="bte:BTH_I0983"/>
<dbReference type="HOGENOM" id="CLU_038878_0_1_4"/>
<dbReference type="Proteomes" id="UP000001930">
    <property type="component" value="Chromosome I"/>
</dbReference>
<dbReference type="GO" id="GO:0016705">
    <property type="term" value="F:oxidoreductase activity, acting on paired donors, with incorporation or reduction of molecular oxygen"/>
    <property type="evidence" value="ECO:0007669"/>
    <property type="project" value="UniProtKB-UniRule"/>
</dbReference>
<dbReference type="GO" id="GO:0006400">
    <property type="term" value="P:tRNA modification"/>
    <property type="evidence" value="ECO:0007669"/>
    <property type="project" value="UniProtKB-UniRule"/>
</dbReference>
<dbReference type="CDD" id="cd01518">
    <property type="entry name" value="RHOD_YceA"/>
    <property type="match status" value="1"/>
</dbReference>
<dbReference type="Gene3D" id="3.30.70.100">
    <property type="match status" value="1"/>
</dbReference>
<dbReference type="Gene3D" id="3.40.250.10">
    <property type="entry name" value="Rhodanese-like domain"/>
    <property type="match status" value="1"/>
</dbReference>
<dbReference type="HAMAP" id="MF_00469">
    <property type="entry name" value="TrhO"/>
    <property type="match status" value="1"/>
</dbReference>
<dbReference type="InterPro" id="IPR001763">
    <property type="entry name" value="Rhodanese-like_dom"/>
</dbReference>
<dbReference type="InterPro" id="IPR036873">
    <property type="entry name" value="Rhodanese-like_dom_sf"/>
</dbReference>
<dbReference type="InterPro" id="IPR020936">
    <property type="entry name" value="TrhO"/>
</dbReference>
<dbReference type="InterPro" id="IPR040503">
    <property type="entry name" value="TRHO_N"/>
</dbReference>
<dbReference type="NCBIfam" id="NF003703">
    <property type="entry name" value="PRK05320.1"/>
    <property type="match status" value="1"/>
</dbReference>
<dbReference type="PANTHER" id="PTHR43268:SF3">
    <property type="entry name" value="RHODANESE-LIKE DOMAIN-CONTAINING PROTEIN 7-RELATED"/>
    <property type="match status" value="1"/>
</dbReference>
<dbReference type="PANTHER" id="PTHR43268">
    <property type="entry name" value="THIOSULFATE SULFURTRANSFERASE/RHODANESE-LIKE DOMAIN-CONTAINING PROTEIN 2"/>
    <property type="match status" value="1"/>
</dbReference>
<dbReference type="Pfam" id="PF00581">
    <property type="entry name" value="Rhodanese"/>
    <property type="match status" value="1"/>
</dbReference>
<dbReference type="Pfam" id="PF17773">
    <property type="entry name" value="UPF0176_N"/>
    <property type="match status" value="1"/>
</dbReference>
<dbReference type="SMART" id="SM00450">
    <property type="entry name" value="RHOD"/>
    <property type="match status" value="1"/>
</dbReference>
<dbReference type="SUPFAM" id="SSF52821">
    <property type="entry name" value="Rhodanese/Cell cycle control phosphatase"/>
    <property type="match status" value="1"/>
</dbReference>
<dbReference type="PROSITE" id="PS50206">
    <property type="entry name" value="RHODANESE_3"/>
    <property type="match status" value="1"/>
</dbReference>
<name>TRHO_BURTA</name>
<evidence type="ECO:0000255" key="1">
    <source>
        <dbReference type="HAMAP-Rule" id="MF_00469"/>
    </source>
</evidence>
<evidence type="ECO:0000305" key="2"/>
<protein>
    <recommendedName>
        <fullName evidence="1">tRNA uridine(34) hydroxylase</fullName>
        <ecNumber evidence="1">1.14.-.-</ecNumber>
    </recommendedName>
    <alternativeName>
        <fullName evidence="1">tRNA hydroxylation protein O</fullName>
    </alternativeName>
</protein>
<reference key="1">
    <citation type="journal article" date="2005" name="BMC Genomics">
        <title>Bacterial genome adaptation to niches: divergence of the potential virulence genes in three Burkholderia species of different survival strategies.</title>
        <authorList>
            <person name="Kim H.S."/>
            <person name="Schell M.A."/>
            <person name="Yu Y."/>
            <person name="Ulrich R.L."/>
            <person name="Sarria S.H."/>
            <person name="Nierman W.C."/>
            <person name="DeShazer D."/>
        </authorList>
    </citation>
    <scope>NUCLEOTIDE SEQUENCE [LARGE SCALE GENOMIC DNA]</scope>
    <source>
        <strain>ATCC 700388 / DSM 13276 / CCUG 48851 / CIP 106301 / E264</strain>
    </source>
</reference>
<feature type="chain" id="PRO_0000242915" description="tRNA uridine(34) hydroxylase">
    <location>
        <begin position="1"/>
        <end position="296"/>
    </location>
</feature>
<feature type="domain" description="Rhodanese" evidence="1">
    <location>
        <begin position="132"/>
        <end position="226"/>
    </location>
</feature>
<feature type="active site" description="Cysteine persulfide intermediate" evidence="1">
    <location>
        <position position="186"/>
    </location>
</feature>
<comment type="function">
    <text evidence="1">Catalyzes oxygen-dependent 5-hydroxyuridine (ho5U) modification at position 34 in tRNAs.</text>
</comment>
<comment type="catalytic activity">
    <reaction evidence="1">
        <text>uridine(34) in tRNA + AH2 + O2 = 5-hydroxyuridine(34) in tRNA + A + H2O</text>
        <dbReference type="Rhea" id="RHEA:64224"/>
        <dbReference type="Rhea" id="RHEA-COMP:11727"/>
        <dbReference type="Rhea" id="RHEA-COMP:13381"/>
        <dbReference type="ChEBI" id="CHEBI:13193"/>
        <dbReference type="ChEBI" id="CHEBI:15377"/>
        <dbReference type="ChEBI" id="CHEBI:15379"/>
        <dbReference type="ChEBI" id="CHEBI:17499"/>
        <dbReference type="ChEBI" id="CHEBI:65315"/>
        <dbReference type="ChEBI" id="CHEBI:136877"/>
    </reaction>
</comment>
<comment type="similarity">
    <text evidence="1">Belongs to the TrhO family.</text>
</comment>
<comment type="sequence caution" evidence="2">
    <conflict type="erroneous initiation">
        <sequence resource="EMBL-CDS" id="ABC36761"/>
    </conflict>
</comment>
<proteinExistence type="inferred from homology"/>
<keyword id="KW-0560">Oxidoreductase</keyword>
<keyword id="KW-0819">tRNA processing</keyword>
<sequence>MTTVNLAAYRFVSLDSIEQWRPLITARCNALGLRGTILLAPEGINLFIAGSRGATDAFVDYLRHDPLFEGKFADLPFKESLSDSQPFRRMLVRLKREIITMKKPAIKPELGRAPSVDARMLKAWLDRGHDDAGRPVVMLDTRNAFEVDVGTFDNALDYRIDKFSQFPGVIEANRADLEGKTVVSFCTGGIRCEKAAIHMKDVGIENVYQLEGGILKYFEEVGGAHYHGDCFVFDYRTALNPQLAPTADVTCFACRAVVPADAQQSPLYVPGKSCPACHPGDQGRRADHRADPAHAA</sequence>